<protein>
    <recommendedName>
        <fullName>Zinc finger protein 571</fullName>
    </recommendedName>
</protein>
<comment type="function">
    <text>May be involved in transcriptional regulation.</text>
</comment>
<comment type="subcellular location">
    <subcellularLocation>
        <location evidence="3">Nucleus</location>
    </subcellularLocation>
</comment>
<comment type="similarity">
    <text evidence="3">Belongs to the krueppel C2H2-type zinc-finger protein family.</text>
</comment>
<reference key="1">
    <citation type="submission" date="2004-11" db="EMBL/GenBank/DDBJ databases">
        <authorList>
            <consortium name="The German cDNA consortium"/>
        </authorList>
    </citation>
    <scope>NUCLEOTIDE SEQUENCE [LARGE SCALE MRNA]</scope>
    <source>
        <tissue>Brain cortex</tissue>
    </source>
</reference>
<keyword id="KW-0238">DNA-binding</keyword>
<keyword id="KW-0479">Metal-binding</keyword>
<keyword id="KW-0539">Nucleus</keyword>
<keyword id="KW-1185">Reference proteome</keyword>
<keyword id="KW-0677">Repeat</keyword>
<keyword id="KW-0804">Transcription</keyword>
<keyword id="KW-0805">Transcription regulation</keyword>
<keyword id="KW-0862">Zinc</keyword>
<keyword id="KW-0863">Zinc-finger</keyword>
<accession>Q5R5Q6</accession>
<gene>
    <name type="primary">ZNF571</name>
</gene>
<proteinExistence type="evidence at transcript level"/>
<dbReference type="EMBL" id="CR860800">
    <property type="protein sequence ID" value="CAH92910.1"/>
    <property type="molecule type" value="mRNA"/>
</dbReference>
<dbReference type="RefSeq" id="NP_001126710.1">
    <property type="nucleotide sequence ID" value="NM_001133238.1"/>
</dbReference>
<dbReference type="SMR" id="Q5R5Q6"/>
<dbReference type="GeneID" id="100173710"/>
<dbReference type="KEGG" id="pon:100173710"/>
<dbReference type="CTD" id="51276"/>
<dbReference type="eggNOG" id="KOG1721">
    <property type="taxonomic scope" value="Eukaryota"/>
</dbReference>
<dbReference type="InParanoid" id="Q5R5Q6"/>
<dbReference type="OrthoDB" id="9411774at2759"/>
<dbReference type="Proteomes" id="UP000001595">
    <property type="component" value="Unplaced"/>
</dbReference>
<dbReference type="GO" id="GO:0000785">
    <property type="term" value="C:chromatin"/>
    <property type="evidence" value="ECO:0007669"/>
    <property type="project" value="TreeGrafter"/>
</dbReference>
<dbReference type="GO" id="GO:0031519">
    <property type="term" value="C:PcG protein complex"/>
    <property type="evidence" value="ECO:0007669"/>
    <property type="project" value="TreeGrafter"/>
</dbReference>
<dbReference type="GO" id="GO:0005667">
    <property type="term" value="C:transcription regulator complex"/>
    <property type="evidence" value="ECO:0007669"/>
    <property type="project" value="TreeGrafter"/>
</dbReference>
<dbReference type="GO" id="GO:0000981">
    <property type="term" value="F:DNA-binding transcription factor activity, RNA polymerase II-specific"/>
    <property type="evidence" value="ECO:0007669"/>
    <property type="project" value="TreeGrafter"/>
</dbReference>
<dbReference type="GO" id="GO:0000978">
    <property type="term" value="F:RNA polymerase II cis-regulatory region sequence-specific DNA binding"/>
    <property type="evidence" value="ECO:0007669"/>
    <property type="project" value="TreeGrafter"/>
</dbReference>
<dbReference type="GO" id="GO:0008270">
    <property type="term" value="F:zinc ion binding"/>
    <property type="evidence" value="ECO:0007669"/>
    <property type="project" value="UniProtKB-KW"/>
</dbReference>
<dbReference type="CDD" id="cd07765">
    <property type="entry name" value="KRAB_A-box"/>
    <property type="match status" value="1"/>
</dbReference>
<dbReference type="FunFam" id="3.30.160.60:FF:000136">
    <property type="entry name" value="GLI family zinc finger 4"/>
    <property type="match status" value="1"/>
</dbReference>
<dbReference type="FunFam" id="3.30.160.60:FF:000446">
    <property type="entry name" value="Zinc finger protein"/>
    <property type="match status" value="1"/>
</dbReference>
<dbReference type="FunFam" id="3.30.160.60:FF:000020">
    <property type="entry name" value="Zinc finger protein 14 homolog"/>
    <property type="match status" value="1"/>
</dbReference>
<dbReference type="FunFam" id="3.30.160.60:FF:000690">
    <property type="entry name" value="Zinc finger protein 354C"/>
    <property type="match status" value="1"/>
</dbReference>
<dbReference type="FunFam" id="3.30.160.60:FF:000338">
    <property type="entry name" value="zinc finger protein 383"/>
    <property type="match status" value="1"/>
</dbReference>
<dbReference type="FunFam" id="3.30.160.60:FF:002254">
    <property type="entry name" value="Zinc finger protein 540"/>
    <property type="match status" value="3"/>
</dbReference>
<dbReference type="FunFam" id="3.30.160.60:FF:000737">
    <property type="entry name" value="Zinc finger protein 565"/>
    <property type="match status" value="1"/>
</dbReference>
<dbReference type="FunFam" id="3.30.160.60:FF:001149">
    <property type="entry name" value="Zinc finger protein 571"/>
    <property type="match status" value="3"/>
</dbReference>
<dbReference type="FunFam" id="3.30.160.60:FF:001380">
    <property type="entry name" value="Zinc finger protein 571"/>
    <property type="match status" value="2"/>
</dbReference>
<dbReference type="FunFam" id="3.30.160.60:FF:001432">
    <property type="entry name" value="Zinc finger protein 571"/>
    <property type="match status" value="1"/>
</dbReference>
<dbReference type="FunFam" id="3.30.160.60:FF:001944">
    <property type="entry name" value="Zinc finger protein 571"/>
    <property type="match status" value="1"/>
</dbReference>
<dbReference type="Gene3D" id="6.10.140.140">
    <property type="match status" value="1"/>
</dbReference>
<dbReference type="Gene3D" id="3.30.160.60">
    <property type="entry name" value="Classic Zinc Finger"/>
    <property type="match status" value="17"/>
</dbReference>
<dbReference type="InterPro" id="IPR001909">
    <property type="entry name" value="KRAB"/>
</dbReference>
<dbReference type="InterPro" id="IPR036051">
    <property type="entry name" value="KRAB_dom_sf"/>
</dbReference>
<dbReference type="InterPro" id="IPR036236">
    <property type="entry name" value="Znf_C2H2_sf"/>
</dbReference>
<dbReference type="InterPro" id="IPR013087">
    <property type="entry name" value="Znf_C2H2_type"/>
</dbReference>
<dbReference type="PANTHER" id="PTHR14003">
    <property type="entry name" value="TRANSCRIPTIONAL REPRESSOR PROTEIN YY"/>
    <property type="match status" value="1"/>
</dbReference>
<dbReference type="PANTHER" id="PTHR14003:SF23">
    <property type="entry name" value="ZINC FINGER PROTEIN 143"/>
    <property type="match status" value="1"/>
</dbReference>
<dbReference type="Pfam" id="PF01352">
    <property type="entry name" value="KRAB"/>
    <property type="match status" value="1"/>
</dbReference>
<dbReference type="Pfam" id="PF00096">
    <property type="entry name" value="zf-C2H2"/>
    <property type="match status" value="13"/>
</dbReference>
<dbReference type="SMART" id="SM00349">
    <property type="entry name" value="KRAB"/>
    <property type="match status" value="1"/>
</dbReference>
<dbReference type="SMART" id="SM00355">
    <property type="entry name" value="ZnF_C2H2"/>
    <property type="match status" value="16"/>
</dbReference>
<dbReference type="SUPFAM" id="SSF57667">
    <property type="entry name" value="beta-beta-alpha zinc fingers"/>
    <property type="match status" value="9"/>
</dbReference>
<dbReference type="SUPFAM" id="SSF109640">
    <property type="entry name" value="KRAB domain (Kruppel-associated box)"/>
    <property type="match status" value="1"/>
</dbReference>
<dbReference type="PROSITE" id="PS50805">
    <property type="entry name" value="KRAB"/>
    <property type="match status" value="1"/>
</dbReference>
<dbReference type="PROSITE" id="PS00028">
    <property type="entry name" value="ZINC_FINGER_C2H2_1"/>
    <property type="match status" value="16"/>
</dbReference>
<dbReference type="PROSITE" id="PS50157">
    <property type="entry name" value="ZINC_FINGER_C2H2_2"/>
    <property type="match status" value="17"/>
</dbReference>
<sequence length="608" mass="70559">MPHLLVTFRDVAIDFTQEEWECLDPAQRDLYRDVMLENYSNLISLDLESSCATKKLSPEKEIYEMESLQWENIGNLINHHLQYGLGDNMECKGNLEGQEASQEGLYMCVKITCEEKATESHSTSSTFHRMIPTKEKLYKCKECRQGFSYLSCLIQHEKNHNIEKCSEVKKHRNTFSKKPSYIQHQRIQTGEKPYECMECGKAFGRSSDLIQHQKIHTNEKPYQCNACGKAFIRGSQLTEHQRVHTGEKPYECKKCGKAFSYCSQYTLHQRIHSGEKPYECKDCGKAFILGSQLTYHQRIHSGEKPYECKECGKAFILGSHLTYHQRVHTGEKPYICKECGKAFLCASQLNEHQRIHTGEKPYECKECGKAFFRGSQLTYHLRVHSGERPYKCKECGKAFISNSNLIQHQRIHTGEKPYKCKECGKAFICGKQLSEHQRIHTGEKPFECKECGKAFIRVAYLTQHEKIHGEKHYECKECGKTFVRATQLTYHQRIHTGEKPYKCKECDKAFIYGSQLSEHQRIHKGEKPYECKQCGKAFIRGSHLTEHLRTHTGEKPYECKECGKAFSRGSELTLHQRIHTGEKPYTCVQCGKDFRRPSQLTQHTRLHN</sequence>
<feature type="chain" id="PRO_0000047663" description="Zinc finger protein 571">
    <location>
        <begin position="1"/>
        <end position="608"/>
    </location>
</feature>
<feature type="domain" description="KRAB" evidence="2">
    <location>
        <begin position="6"/>
        <end position="84"/>
    </location>
</feature>
<feature type="zinc finger region" description="C2H2-type 1" evidence="1">
    <location>
        <begin position="138"/>
        <end position="160"/>
    </location>
</feature>
<feature type="zinc finger region" description="C2H2-type 2; degenerate" evidence="1">
    <location>
        <begin position="163"/>
        <end position="188"/>
    </location>
</feature>
<feature type="zinc finger region" description="C2H2-type 3" evidence="1">
    <location>
        <begin position="194"/>
        <end position="216"/>
    </location>
</feature>
<feature type="zinc finger region" description="C2H2-type 4" evidence="1">
    <location>
        <begin position="222"/>
        <end position="244"/>
    </location>
</feature>
<feature type="zinc finger region" description="C2H2-type 5" evidence="1">
    <location>
        <begin position="250"/>
        <end position="272"/>
    </location>
</feature>
<feature type="zinc finger region" description="C2H2-type 6" evidence="1">
    <location>
        <begin position="278"/>
        <end position="300"/>
    </location>
</feature>
<feature type="zinc finger region" description="C2H2-type 7" evidence="1">
    <location>
        <begin position="306"/>
        <end position="328"/>
    </location>
</feature>
<feature type="zinc finger region" description="C2H2-type 8" evidence="1">
    <location>
        <begin position="334"/>
        <end position="356"/>
    </location>
</feature>
<feature type="zinc finger region" description="C2H2-type 9" evidence="1">
    <location>
        <begin position="362"/>
        <end position="384"/>
    </location>
</feature>
<feature type="zinc finger region" description="C2H2-type 10" evidence="1">
    <location>
        <begin position="390"/>
        <end position="412"/>
    </location>
</feature>
<feature type="zinc finger region" description="C2H2-type 11" evidence="1">
    <location>
        <begin position="418"/>
        <end position="440"/>
    </location>
</feature>
<feature type="zinc finger region" description="C2H2-type 12" evidence="1">
    <location>
        <begin position="446"/>
        <end position="468"/>
    </location>
</feature>
<feature type="zinc finger region" description="C2H2-type 13" evidence="1">
    <location>
        <begin position="473"/>
        <end position="495"/>
    </location>
</feature>
<feature type="zinc finger region" description="C2H2-type 14" evidence="1">
    <location>
        <begin position="501"/>
        <end position="523"/>
    </location>
</feature>
<feature type="zinc finger region" description="C2H2-type 15" evidence="1">
    <location>
        <begin position="529"/>
        <end position="551"/>
    </location>
</feature>
<feature type="zinc finger region" description="C2H2-type 16" evidence="1">
    <location>
        <begin position="557"/>
        <end position="579"/>
    </location>
</feature>
<feature type="zinc finger region" description="C2H2-type 17" evidence="1">
    <location>
        <begin position="585"/>
        <end position="607"/>
    </location>
</feature>
<evidence type="ECO:0000255" key="1">
    <source>
        <dbReference type="PROSITE-ProRule" id="PRU00042"/>
    </source>
</evidence>
<evidence type="ECO:0000255" key="2">
    <source>
        <dbReference type="PROSITE-ProRule" id="PRU00119"/>
    </source>
</evidence>
<evidence type="ECO:0000305" key="3"/>
<name>ZN571_PONAB</name>
<organism>
    <name type="scientific">Pongo abelii</name>
    <name type="common">Sumatran orangutan</name>
    <name type="synonym">Pongo pygmaeus abelii</name>
    <dbReference type="NCBI Taxonomy" id="9601"/>
    <lineage>
        <taxon>Eukaryota</taxon>
        <taxon>Metazoa</taxon>
        <taxon>Chordata</taxon>
        <taxon>Craniata</taxon>
        <taxon>Vertebrata</taxon>
        <taxon>Euteleostomi</taxon>
        <taxon>Mammalia</taxon>
        <taxon>Eutheria</taxon>
        <taxon>Euarchontoglires</taxon>
        <taxon>Primates</taxon>
        <taxon>Haplorrhini</taxon>
        <taxon>Catarrhini</taxon>
        <taxon>Hominidae</taxon>
        <taxon>Pongo</taxon>
    </lineage>
</organism>